<comment type="catalytic activity">
    <reaction evidence="1">
        <text>(2R)-O-phospho-3-sulfolactate + H2O = (2R)-3-sulfolactate + phosphate</text>
        <dbReference type="Rhea" id="RHEA:23416"/>
        <dbReference type="ChEBI" id="CHEBI:15377"/>
        <dbReference type="ChEBI" id="CHEBI:15597"/>
        <dbReference type="ChEBI" id="CHEBI:43474"/>
        <dbReference type="ChEBI" id="CHEBI:58738"/>
        <dbReference type="EC" id="3.1.3.71"/>
    </reaction>
</comment>
<comment type="cofactor">
    <cofactor evidence="1">
        <name>Mg(2+)</name>
        <dbReference type="ChEBI" id="CHEBI:18420"/>
    </cofactor>
</comment>
<comment type="similarity">
    <text evidence="1">Belongs to the ComB family.</text>
</comment>
<sequence>MKIDIIISADDIKKEKILHKSVIVVDMLRATSVIITAINNGCREVIPVLTIEEALEIYHKNREKYVMGGERKALKIEGFHCSNSPLEYSRQVVENKTLVITTSNGTKAIKGSIMAKNILIGALINADEVANRSINLNNDVVIVNAGTCGQFSIDDFICSGYMINCVIKKIKVDLTDIARTALYIYEQNPDIITFIKKASHYKRIKKLKLYDDLEYCCRKDIIKIVPEYIDGIIKCNKLIY</sequence>
<accession>A5N4H7</accession>
<gene>
    <name evidence="1" type="primary">comB</name>
    <name type="ordered locus">CKL_0138</name>
</gene>
<organism>
    <name type="scientific">Clostridium kluyveri (strain ATCC 8527 / DSM 555 / NBRC 12016 / NCIMB 10680 / K1)</name>
    <dbReference type="NCBI Taxonomy" id="431943"/>
    <lineage>
        <taxon>Bacteria</taxon>
        <taxon>Bacillati</taxon>
        <taxon>Bacillota</taxon>
        <taxon>Clostridia</taxon>
        <taxon>Eubacteriales</taxon>
        <taxon>Clostridiaceae</taxon>
        <taxon>Clostridium</taxon>
    </lineage>
</organism>
<proteinExistence type="inferred from homology"/>
<dbReference type="EC" id="3.1.3.71" evidence="1"/>
<dbReference type="EMBL" id="CP000673">
    <property type="protein sequence ID" value="EDK32208.1"/>
    <property type="molecule type" value="Genomic_DNA"/>
</dbReference>
<dbReference type="RefSeq" id="WP_011988734.1">
    <property type="nucleotide sequence ID" value="NC_009706.1"/>
</dbReference>
<dbReference type="SMR" id="A5N4H7"/>
<dbReference type="STRING" id="431943.CKL_0138"/>
<dbReference type="KEGG" id="ckl:CKL_0138"/>
<dbReference type="eggNOG" id="COG2045">
    <property type="taxonomic scope" value="Bacteria"/>
</dbReference>
<dbReference type="HOGENOM" id="CLU_070028_0_0_9"/>
<dbReference type="Proteomes" id="UP000002411">
    <property type="component" value="Chromosome"/>
</dbReference>
<dbReference type="GO" id="GO:0050532">
    <property type="term" value="F:2-phosphosulfolactate phosphatase activity"/>
    <property type="evidence" value="ECO:0007669"/>
    <property type="project" value="UniProtKB-UniRule"/>
</dbReference>
<dbReference type="GO" id="GO:0000287">
    <property type="term" value="F:magnesium ion binding"/>
    <property type="evidence" value="ECO:0007669"/>
    <property type="project" value="UniProtKB-UniRule"/>
</dbReference>
<dbReference type="GO" id="GO:0050545">
    <property type="term" value="F:sulfopyruvate decarboxylase activity"/>
    <property type="evidence" value="ECO:0007669"/>
    <property type="project" value="TreeGrafter"/>
</dbReference>
<dbReference type="FunFam" id="3.90.1560.10:FF:000001">
    <property type="entry name" value="Probable 2-phosphosulfolactate phosphatase"/>
    <property type="match status" value="1"/>
</dbReference>
<dbReference type="Gene3D" id="3.90.1560.10">
    <property type="entry name" value="ComB-like"/>
    <property type="match status" value="1"/>
</dbReference>
<dbReference type="HAMAP" id="MF_00490">
    <property type="entry name" value="ComB"/>
    <property type="match status" value="1"/>
</dbReference>
<dbReference type="InterPro" id="IPR005238">
    <property type="entry name" value="ComB-like"/>
</dbReference>
<dbReference type="InterPro" id="IPR036702">
    <property type="entry name" value="ComB-like_sf"/>
</dbReference>
<dbReference type="NCBIfam" id="NF002055">
    <property type="entry name" value="PRK00886.1-4"/>
    <property type="match status" value="1"/>
</dbReference>
<dbReference type="PANTHER" id="PTHR37311">
    <property type="entry name" value="2-PHOSPHOSULFOLACTATE PHOSPHATASE-RELATED"/>
    <property type="match status" value="1"/>
</dbReference>
<dbReference type="PANTHER" id="PTHR37311:SF1">
    <property type="entry name" value="2-PHOSPHOSULFOLACTATE PHOSPHATASE-RELATED"/>
    <property type="match status" value="1"/>
</dbReference>
<dbReference type="Pfam" id="PF04029">
    <property type="entry name" value="2-ph_phosp"/>
    <property type="match status" value="1"/>
</dbReference>
<dbReference type="SUPFAM" id="SSF142823">
    <property type="entry name" value="ComB-like"/>
    <property type="match status" value="1"/>
</dbReference>
<name>COMB_CLOK5</name>
<protein>
    <recommendedName>
        <fullName evidence="1">Probable 2-phosphosulfolactate phosphatase</fullName>
        <ecNumber evidence="1">3.1.3.71</ecNumber>
    </recommendedName>
</protein>
<feature type="chain" id="PRO_1000081393" description="Probable 2-phosphosulfolactate phosphatase">
    <location>
        <begin position="1"/>
        <end position="240"/>
    </location>
</feature>
<keyword id="KW-0378">Hydrolase</keyword>
<keyword id="KW-0460">Magnesium</keyword>
<keyword id="KW-1185">Reference proteome</keyword>
<reference key="1">
    <citation type="journal article" date="2008" name="Proc. Natl. Acad. Sci. U.S.A.">
        <title>The genome of Clostridium kluyveri, a strict anaerobe with unique metabolic features.</title>
        <authorList>
            <person name="Seedorf H."/>
            <person name="Fricke W.F."/>
            <person name="Veith B."/>
            <person name="Brueggemann H."/>
            <person name="Liesegang H."/>
            <person name="Strittmatter A."/>
            <person name="Miethke M."/>
            <person name="Buckel W."/>
            <person name="Hinderberger J."/>
            <person name="Li F."/>
            <person name="Hagemeier C."/>
            <person name="Thauer R.K."/>
            <person name="Gottschalk G."/>
        </authorList>
    </citation>
    <scope>NUCLEOTIDE SEQUENCE [LARGE SCALE GENOMIC DNA]</scope>
    <source>
        <strain>ATCC 8527 / DSM 555 / NBRC 12016 / NCIMB 10680 / K1</strain>
    </source>
</reference>
<evidence type="ECO:0000255" key="1">
    <source>
        <dbReference type="HAMAP-Rule" id="MF_00490"/>
    </source>
</evidence>